<accession>Q19038</accession>
<feature type="chain" id="PRO_0000181285" description="Degenerin del-1">
    <location>
        <begin position="1"/>
        <end position="664"/>
    </location>
</feature>
<feature type="topological domain" description="Cytoplasmic" evidence="1">
    <location>
        <begin position="1"/>
        <end position="67"/>
    </location>
</feature>
<feature type="transmembrane region" description="Helical" evidence="1">
    <location>
        <begin position="68"/>
        <end position="88"/>
    </location>
</feature>
<feature type="topological domain" description="Extracellular" evidence="1">
    <location>
        <begin position="89"/>
        <end position="607"/>
    </location>
</feature>
<feature type="transmembrane region" description="Helical" evidence="1">
    <location>
        <begin position="608"/>
        <end position="628"/>
    </location>
</feature>
<feature type="topological domain" description="Cytoplasmic" evidence="1">
    <location>
        <begin position="629"/>
        <end position="664"/>
    </location>
</feature>
<feature type="glycosylation site" description="N-linked (GlcNAc...) asparagine" evidence="1">
    <location>
        <position position="241"/>
    </location>
</feature>
<feature type="glycosylation site" description="N-linked (GlcNAc...) asparagine" evidence="1">
    <location>
        <position position="300"/>
    </location>
</feature>
<feature type="glycosylation site" description="N-linked (GlcNAc...) asparagine" evidence="1">
    <location>
        <position position="394"/>
    </location>
</feature>
<feature type="glycosylation site" description="N-linked (GlcNAc...) asparagine" evidence="1">
    <location>
        <position position="508"/>
    </location>
</feature>
<feature type="glycosylation site" description="N-linked (GlcNAc...) asparagine" evidence="1">
    <location>
        <position position="562"/>
    </location>
</feature>
<sequence>MARKYIDILKKSKMMLFQDVGKSFEDDSPCKEEAPKTQIQHSVRDFCEQTTFHGVNMIFTTSLYWVRFLWVVVSLVCICLCMYSFSHVKDKYDRKEKIVNVELVFESAPFPAITVCNLNPFKNHLARSVPEISETLDAFHQAVVYSNDATMDELSGRGRRSLNDGPSFKYLQYEPVYSDCSCVPGRQECIAQTSAPRTLENACICNYDRHDGSAWPCYSAQTWEKSICPECNDIGFCNVPNTTGSGNIPCYCQLEMGYCVFQPESRVRRIWEFQGNKIPEKGSPLRKEYMEQLTQLGYGNMTDQVAITTQAKEKMILKMSGLHPQRRAALGYGKSELIKMCSFNGQQCNIDTEFKLHIDPSFGNCYTFNANPEKKLASSRAGPSYGLRLMMFVNSSDYLPTTEATGVRIAIHGKEECPFPDTFGYSAPTGVISSFGISLRNINRLPQPYGNCLQKDNPQSRSIYKGYKYEPEGCFRSCYQYRIIAKCGCADPRYPKPWKRSAWCDSTNTTTLNCLTTEGAKLSTKENQKHCKCIQPCQQDQYTTTYSAAKWPSGSIQTSCDNHSKDCNSYLREHAAMIEIYYEQMSYEILRESESYSWFNLMADMGGQAGLFLGASIMSVIEFLFFAVRTLGIACKPRRWRQKTELLRAEELNDAEKGVSTNNN</sequence>
<organism>
    <name type="scientific">Caenorhabditis elegans</name>
    <dbReference type="NCBI Taxonomy" id="6239"/>
    <lineage>
        <taxon>Eukaryota</taxon>
        <taxon>Metazoa</taxon>
        <taxon>Ecdysozoa</taxon>
        <taxon>Nematoda</taxon>
        <taxon>Chromadorea</taxon>
        <taxon>Rhabditida</taxon>
        <taxon>Rhabditina</taxon>
        <taxon>Rhabditomorpha</taxon>
        <taxon>Rhabditoidea</taxon>
        <taxon>Rhabditidae</taxon>
        <taxon>Peloderinae</taxon>
        <taxon>Caenorhabditis</taxon>
    </lineage>
</organism>
<name>DEL1_CAEEL</name>
<comment type="function">
    <text>Probable sodium channel subunit.</text>
</comment>
<comment type="subcellular location">
    <subcellularLocation>
        <location>Membrane</location>
        <topology>Multi-pass membrane protein</topology>
    </subcellularLocation>
</comment>
<comment type="similarity">
    <text evidence="2">Belongs to the amiloride-sensitive sodium channel (TC 1.A.6) family.</text>
</comment>
<gene>
    <name type="primary">del-1</name>
    <name type="ORF">E02H4.1</name>
</gene>
<evidence type="ECO:0000255" key="1"/>
<evidence type="ECO:0000305" key="2"/>
<keyword id="KW-0325">Glycoprotein</keyword>
<keyword id="KW-0407">Ion channel</keyword>
<keyword id="KW-0406">Ion transport</keyword>
<keyword id="KW-0472">Membrane</keyword>
<keyword id="KW-1185">Reference proteome</keyword>
<keyword id="KW-0915">Sodium</keyword>
<keyword id="KW-0894">Sodium channel</keyword>
<keyword id="KW-0739">Sodium transport</keyword>
<keyword id="KW-0812">Transmembrane</keyword>
<keyword id="KW-1133">Transmembrane helix</keyword>
<keyword id="KW-0813">Transport</keyword>
<dbReference type="EMBL" id="U76403">
    <property type="protein sequence ID" value="AAB39735.1"/>
    <property type="molecule type" value="mRNA"/>
</dbReference>
<dbReference type="EMBL" id="Z68003">
    <property type="protein sequence ID" value="CAA91975.1"/>
    <property type="molecule type" value="Genomic_DNA"/>
</dbReference>
<dbReference type="PIR" id="T20420">
    <property type="entry name" value="T20420"/>
</dbReference>
<dbReference type="RefSeq" id="NP_510380.1">
    <property type="nucleotide sequence ID" value="NM_077979.1"/>
</dbReference>
<dbReference type="FunCoup" id="Q19038">
    <property type="interactions" value="19"/>
</dbReference>
<dbReference type="STRING" id="6239.E02H4.1a.1"/>
<dbReference type="TCDB" id="1.A.6.2.5">
    <property type="family name" value="the epithelial na(+) channel (enac) family"/>
</dbReference>
<dbReference type="GlyCosmos" id="Q19038">
    <property type="glycosylation" value="5 sites, No reported glycans"/>
</dbReference>
<dbReference type="PaxDb" id="6239-E02H4.1"/>
<dbReference type="EnsemblMetazoa" id="E02H4.1a.1">
    <property type="protein sequence ID" value="E02H4.1a.1"/>
    <property type="gene ID" value="WBGene00000952"/>
</dbReference>
<dbReference type="UCSC" id="E02H4.1">
    <property type="organism name" value="c. elegans"/>
</dbReference>
<dbReference type="AGR" id="WB:WBGene00000952"/>
<dbReference type="WormBase" id="E02H4.1a">
    <property type="protein sequence ID" value="CE52816"/>
    <property type="gene ID" value="WBGene00000952"/>
    <property type="gene designation" value="del-1"/>
</dbReference>
<dbReference type="eggNOG" id="KOG4294">
    <property type="taxonomic scope" value="Eukaryota"/>
</dbReference>
<dbReference type="HOGENOM" id="CLU_017673_0_0_1"/>
<dbReference type="InParanoid" id="Q19038"/>
<dbReference type="OMA" id="NACICNY"/>
<dbReference type="PhylomeDB" id="Q19038"/>
<dbReference type="Reactome" id="R-CEL-2672351">
    <property type="pathway name" value="Stimuli-sensing channels"/>
</dbReference>
<dbReference type="Reactome" id="R-CEL-9730628">
    <property type="pathway name" value="Sensory perception of salty taste"/>
</dbReference>
<dbReference type="PRO" id="PR:Q19038"/>
<dbReference type="Proteomes" id="UP000001940">
    <property type="component" value="Chromosome X"/>
</dbReference>
<dbReference type="Bgee" id="WBGene00000952">
    <property type="expression patterns" value="Expressed in larva and 3 other cell types or tissues"/>
</dbReference>
<dbReference type="ExpressionAtlas" id="Q19038">
    <property type="expression patterns" value="baseline and differential"/>
</dbReference>
<dbReference type="GO" id="GO:0005886">
    <property type="term" value="C:plasma membrane"/>
    <property type="evidence" value="ECO:0000318"/>
    <property type="project" value="GO_Central"/>
</dbReference>
<dbReference type="GO" id="GO:0015280">
    <property type="term" value="F:ligand-gated sodium channel activity"/>
    <property type="evidence" value="ECO:0000318"/>
    <property type="project" value="GO_Central"/>
</dbReference>
<dbReference type="GO" id="GO:0035725">
    <property type="term" value="P:sodium ion transmembrane transport"/>
    <property type="evidence" value="ECO:0000318"/>
    <property type="project" value="GO_Central"/>
</dbReference>
<dbReference type="Gene3D" id="2.60.470.10">
    <property type="entry name" value="Acid-sensing ion channels like domains"/>
    <property type="match status" value="1"/>
</dbReference>
<dbReference type="Gene3D" id="1.10.287.770">
    <property type="entry name" value="YojJ-like"/>
    <property type="match status" value="1"/>
</dbReference>
<dbReference type="InterPro" id="IPR004726">
    <property type="entry name" value="Deg-1"/>
</dbReference>
<dbReference type="InterPro" id="IPR001873">
    <property type="entry name" value="ENaC"/>
</dbReference>
<dbReference type="InterPro" id="IPR020903">
    <property type="entry name" value="ENaC_CS"/>
</dbReference>
<dbReference type="NCBIfam" id="TIGR00867">
    <property type="entry name" value="deg-1"/>
    <property type="match status" value="1"/>
</dbReference>
<dbReference type="PANTHER" id="PTHR11690">
    <property type="entry name" value="AMILORIDE-SENSITIVE SODIUM CHANNEL-RELATED"/>
    <property type="match status" value="1"/>
</dbReference>
<dbReference type="PANTHER" id="PTHR11690:SF248">
    <property type="entry name" value="PICKPOCKET 17, ISOFORM A"/>
    <property type="match status" value="1"/>
</dbReference>
<dbReference type="Pfam" id="PF00858">
    <property type="entry name" value="ASC"/>
    <property type="match status" value="1"/>
</dbReference>
<dbReference type="PRINTS" id="PR01078">
    <property type="entry name" value="AMINACHANNEL"/>
</dbReference>
<dbReference type="PROSITE" id="PS01206">
    <property type="entry name" value="ASC"/>
    <property type="match status" value="1"/>
</dbReference>
<reference key="1">
    <citation type="submission" date="1996-10" db="EMBL/GenBank/DDBJ databases">
        <authorList>
            <person name="Tavernarakis N."/>
            <person name="Shreffler W."/>
            <person name="Wang S.L."/>
            <person name="Driscoll M."/>
        </authorList>
    </citation>
    <scope>NUCLEOTIDE SEQUENCE [MRNA]</scope>
    <source>
        <strain>Bristol N2</strain>
    </source>
</reference>
<reference key="2">
    <citation type="journal article" date="1998" name="Science">
        <title>Genome sequence of the nematode C. elegans: a platform for investigating biology.</title>
        <authorList>
            <consortium name="The C. elegans sequencing consortium"/>
        </authorList>
    </citation>
    <scope>NUCLEOTIDE SEQUENCE [LARGE SCALE GENOMIC DNA]</scope>
    <source>
        <strain>Bristol N2</strain>
    </source>
</reference>
<proteinExistence type="evidence at transcript level"/>
<protein>
    <recommendedName>
        <fullName>Degenerin del-1</fullName>
    </recommendedName>
</protein>